<proteinExistence type="inferred from homology"/>
<reference key="1">
    <citation type="journal article" date="2007" name="Curr. Biol.">
        <title>Reduced genome of the thioautotrophic intracellular symbiont in a deep-sea clam, Calyptogena okutanii.</title>
        <authorList>
            <person name="Kuwahara H."/>
            <person name="Yoshida T."/>
            <person name="Takaki Y."/>
            <person name="Shimamura S."/>
            <person name="Nishi S."/>
            <person name="Harada M."/>
            <person name="Matsuyama K."/>
            <person name="Takishita K."/>
            <person name="Kawato M."/>
            <person name="Uematsu K."/>
            <person name="Fujiwara Y."/>
            <person name="Sato T."/>
            <person name="Kato C."/>
            <person name="Kitagawa M."/>
            <person name="Kato I."/>
            <person name="Maruyama T."/>
        </authorList>
    </citation>
    <scope>NUCLEOTIDE SEQUENCE [LARGE SCALE GENOMIC DNA]</scope>
    <source>
        <strain>HA</strain>
    </source>
</reference>
<protein>
    <recommendedName>
        <fullName evidence="1">Large ribosomal subunit protein bL12</fullName>
    </recommendedName>
    <alternativeName>
        <fullName evidence="2">50S ribosomal protein L7/L12</fullName>
    </alternativeName>
</protein>
<evidence type="ECO:0000255" key="1">
    <source>
        <dbReference type="HAMAP-Rule" id="MF_00368"/>
    </source>
</evidence>
<evidence type="ECO:0000305" key="2"/>
<feature type="chain" id="PRO_1000007109" description="Large ribosomal subunit protein bL12">
    <location>
        <begin position="1"/>
        <end position="124"/>
    </location>
</feature>
<accession>A5CW26</accession>
<keyword id="KW-1185">Reference proteome</keyword>
<keyword id="KW-0687">Ribonucleoprotein</keyword>
<keyword id="KW-0689">Ribosomal protein</keyword>
<sequence length="124" mass="13267">MAKLTNEDILNAIADMSVIDVVELVSAMEEKFGVSATAVTPVAVVADVDNTVVEKDEFDIMLTSFGEKKVAVIKAVRSITGLGLKESKDMVESAPVVIKESASKIEAEDIERQLKEVGASVELK</sequence>
<organism>
    <name type="scientific">Vesicomyosocius okutanii subsp. Calyptogena okutanii (strain HA)</name>
    <dbReference type="NCBI Taxonomy" id="412965"/>
    <lineage>
        <taxon>Bacteria</taxon>
        <taxon>Pseudomonadati</taxon>
        <taxon>Pseudomonadota</taxon>
        <taxon>Gammaproteobacteria</taxon>
        <taxon>Candidatus Pseudothioglobaceae</taxon>
        <taxon>Candidatus Vesicomyosocius</taxon>
    </lineage>
</organism>
<comment type="function">
    <text evidence="1">Forms part of the ribosomal stalk which helps the ribosome interact with GTP-bound translation factors. Is thus essential for accurate translation.</text>
</comment>
<comment type="subunit">
    <text evidence="1">Homodimer. Part of the ribosomal stalk of the 50S ribosomal subunit. Forms a multimeric L10(L12)X complex, where L10 forms an elongated spine to which 2 to 4 L12 dimers bind in a sequential fashion. Binds GTP-bound translation factors.</text>
</comment>
<comment type="similarity">
    <text evidence="1">Belongs to the bacterial ribosomal protein bL12 family.</text>
</comment>
<gene>
    <name evidence="1" type="primary">rplL</name>
    <name type="ordered locus">COSY_0737</name>
</gene>
<dbReference type="EMBL" id="AP009247">
    <property type="protein sequence ID" value="BAF61849.1"/>
    <property type="molecule type" value="Genomic_DNA"/>
</dbReference>
<dbReference type="RefSeq" id="WP_011930119.1">
    <property type="nucleotide sequence ID" value="NC_009465.1"/>
</dbReference>
<dbReference type="SMR" id="A5CW26"/>
<dbReference type="STRING" id="412965.COSY_0737"/>
<dbReference type="KEGG" id="vok:COSY_0737"/>
<dbReference type="eggNOG" id="COG0222">
    <property type="taxonomic scope" value="Bacteria"/>
</dbReference>
<dbReference type="HOGENOM" id="CLU_086499_3_2_6"/>
<dbReference type="OrthoDB" id="9811748at2"/>
<dbReference type="Proteomes" id="UP000000247">
    <property type="component" value="Chromosome"/>
</dbReference>
<dbReference type="GO" id="GO:0022625">
    <property type="term" value="C:cytosolic large ribosomal subunit"/>
    <property type="evidence" value="ECO:0007669"/>
    <property type="project" value="TreeGrafter"/>
</dbReference>
<dbReference type="GO" id="GO:0003729">
    <property type="term" value="F:mRNA binding"/>
    <property type="evidence" value="ECO:0007669"/>
    <property type="project" value="TreeGrafter"/>
</dbReference>
<dbReference type="GO" id="GO:0003735">
    <property type="term" value="F:structural constituent of ribosome"/>
    <property type="evidence" value="ECO:0007669"/>
    <property type="project" value="InterPro"/>
</dbReference>
<dbReference type="GO" id="GO:0006412">
    <property type="term" value="P:translation"/>
    <property type="evidence" value="ECO:0007669"/>
    <property type="project" value="UniProtKB-UniRule"/>
</dbReference>
<dbReference type="CDD" id="cd00387">
    <property type="entry name" value="Ribosomal_L7_L12"/>
    <property type="match status" value="1"/>
</dbReference>
<dbReference type="FunFam" id="3.30.1390.10:FF:000001">
    <property type="entry name" value="50S ribosomal protein L7/L12"/>
    <property type="match status" value="1"/>
</dbReference>
<dbReference type="Gene3D" id="3.30.1390.10">
    <property type="match status" value="1"/>
</dbReference>
<dbReference type="Gene3D" id="1.20.5.710">
    <property type="entry name" value="Single helix bin"/>
    <property type="match status" value="1"/>
</dbReference>
<dbReference type="HAMAP" id="MF_00368">
    <property type="entry name" value="Ribosomal_bL12"/>
    <property type="match status" value="1"/>
</dbReference>
<dbReference type="InterPro" id="IPR000206">
    <property type="entry name" value="Ribosomal_bL12"/>
</dbReference>
<dbReference type="InterPro" id="IPR013823">
    <property type="entry name" value="Ribosomal_bL12_C"/>
</dbReference>
<dbReference type="InterPro" id="IPR014719">
    <property type="entry name" value="Ribosomal_bL12_C/ClpS-like"/>
</dbReference>
<dbReference type="InterPro" id="IPR008932">
    <property type="entry name" value="Ribosomal_bL12_oligo"/>
</dbReference>
<dbReference type="InterPro" id="IPR036235">
    <property type="entry name" value="Ribosomal_bL12_oligo_N_sf"/>
</dbReference>
<dbReference type="NCBIfam" id="TIGR00855">
    <property type="entry name" value="L12"/>
    <property type="match status" value="1"/>
</dbReference>
<dbReference type="PANTHER" id="PTHR45987">
    <property type="entry name" value="39S RIBOSOMAL PROTEIN L12"/>
    <property type="match status" value="1"/>
</dbReference>
<dbReference type="PANTHER" id="PTHR45987:SF4">
    <property type="entry name" value="LARGE RIBOSOMAL SUBUNIT PROTEIN BL12M"/>
    <property type="match status" value="1"/>
</dbReference>
<dbReference type="Pfam" id="PF00542">
    <property type="entry name" value="Ribosomal_L12"/>
    <property type="match status" value="1"/>
</dbReference>
<dbReference type="Pfam" id="PF16320">
    <property type="entry name" value="Ribosomal_L12_N"/>
    <property type="match status" value="1"/>
</dbReference>
<dbReference type="SUPFAM" id="SSF54736">
    <property type="entry name" value="ClpS-like"/>
    <property type="match status" value="1"/>
</dbReference>
<dbReference type="SUPFAM" id="SSF48300">
    <property type="entry name" value="Ribosomal protein L7/12, oligomerisation (N-terminal) domain"/>
    <property type="match status" value="1"/>
</dbReference>
<name>RL7_VESOH</name>